<protein>
    <recommendedName>
        <fullName evidence="1">RNA-binding protein Hfq</fullName>
    </recommendedName>
</protein>
<accession>Q2KYA0</accession>
<comment type="function">
    <text evidence="1">RNA chaperone that binds small regulatory RNA (sRNAs) and mRNAs to facilitate mRNA translational regulation in response to envelope stress, environmental stress and changes in metabolite concentrations. Also binds with high specificity to tRNAs.</text>
</comment>
<comment type="subunit">
    <text evidence="1">Homohexamer.</text>
</comment>
<comment type="similarity">
    <text evidence="1">Belongs to the Hfq family.</text>
</comment>
<sequence>MSNKGQTLQDPFLNTLRKEHVPVSIYLVNGIKLQGQIESFDQYVVLLRNTVTQMVYKHAISTVVPARAVSFQVEVPAE</sequence>
<name>HFQ_BORA1</name>
<feature type="chain" id="PRO_0000265141" description="RNA-binding protein Hfq">
    <location>
        <begin position="1"/>
        <end position="78"/>
    </location>
</feature>
<feature type="domain" description="Sm" evidence="2">
    <location>
        <begin position="10"/>
        <end position="69"/>
    </location>
</feature>
<evidence type="ECO:0000255" key="1">
    <source>
        <dbReference type="HAMAP-Rule" id="MF_00436"/>
    </source>
</evidence>
<evidence type="ECO:0000255" key="2">
    <source>
        <dbReference type="PROSITE-ProRule" id="PRU01346"/>
    </source>
</evidence>
<dbReference type="EMBL" id="AM167904">
    <property type="protein sequence ID" value="CAJ49948.1"/>
    <property type="molecule type" value="Genomic_DNA"/>
</dbReference>
<dbReference type="RefSeq" id="WP_012417999.1">
    <property type="nucleotide sequence ID" value="NC_010645.1"/>
</dbReference>
<dbReference type="SMR" id="Q2KYA0"/>
<dbReference type="STRING" id="360910.BAV2338"/>
<dbReference type="GeneID" id="92934485"/>
<dbReference type="KEGG" id="bav:BAV2338"/>
<dbReference type="eggNOG" id="COG1923">
    <property type="taxonomic scope" value="Bacteria"/>
</dbReference>
<dbReference type="HOGENOM" id="CLU_113688_2_2_4"/>
<dbReference type="OrthoDB" id="9799751at2"/>
<dbReference type="Proteomes" id="UP000001977">
    <property type="component" value="Chromosome"/>
</dbReference>
<dbReference type="GO" id="GO:0005829">
    <property type="term" value="C:cytosol"/>
    <property type="evidence" value="ECO:0007669"/>
    <property type="project" value="TreeGrafter"/>
</dbReference>
<dbReference type="GO" id="GO:0003723">
    <property type="term" value="F:RNA binding"/>
    <property type="evidence" value="ECO:0007669"/>
    <property type="project" value="UniProtKB-UniRule"/>
</dbReference>
<dbReference type="GO" id="GO:0006355">
    <property type="term" value="P:regulation of DNA-templated transcription"/>
    <property type="evidence" value="ECO:0007669"/>
    <property type="project" value="InterPro"/>
</dbReference>
<dbReference type="GO" id="GO:0043487">
    <property type="term" value="P:regulation of RNA stability"/>
    <property type="evidence" value="ECO:0007669"/>
    <property type="project" value="TreeGrafter"/>
</dbReference>
<dbReference type="GO" id="GO:0045974">
    <property type="term" value="P:regulation of translation, ncRNA-mediated"/>
    <property type="evidence" value="ECO:0007669"/>
    <property type="project" value="TreeGrafter"/>
</dbReference>
<dbReference type="CDD" id="cd01716">
    <property type="entry name" value="Hfq"/>
    <property type="match status" value="1"/>
</dbReference>
<dbReference type="FunFam" id="2.30.30.100:FF:000001">
    <property type="entry name" value="RNA-binding protein Hfq"/>
    <property type="match status" value="1"/>
</dbReference>
<dbReference type="Gene3D" id="2.30.30.100">
    <property type="match status" value="1"/>
</dbReference>
<dbReference type="HAMAP" id="MF_00436">
    <property type="entry name" value="Hfq"/>
    <property type="match status" value="1"/>
</dbReference>
<dbReference type="InterPro" id="IPR005001">
    <property type="entry name" value="Hfq"/>
</dbReference>
<dbReference type="InterPro" id="IPR010920">
    <property type="entry name" value="LSM_dom_sf"/>
</dbReference>
<dbReference type="InterPro" id="IPR047575">
    <property type="entry name" value="Sm"/>
</dbReference>
<dbReference type="NCBIfam" id="TIGR02383">
    <property type="entry name" value="Hfq"/>
    <property type="match status" value="1"/>
</dbReference>
<dbReference type="NCBIfam" id="NF001602">
    <property type="entry name" value="PRK00395.1"/>
    <property type="match status" value="1"/>
</dbReference>
<dbReference type="PANTHER" id="PTHR34772">
    <property type="entry name" value="RNA-BINDING PROTEIN HFQ"/>
    <property type="match status" value="1"/>
</dbReference>
<dbReference type="PANTHER" id="PTHR34772:SF1">
    <property type="entry name" value="RNA-BINDING PROTEIN HFQ"/>
    <property type="match status" value="1"/>
</dbReference>
<dbReference type="Pfam" id="PF17209">
    <property type="entry name" value="Hfq"/>
    <property type="match status" value="1"/>
</dbReference>
<dbReference type="SUPFAM" id="SSF50182">
    <property type="entry name" value="Sm-like ribonucleoproteins"/>
    <property type="match status" value="1"/>
</dbReference>
<dbReference type="PROSITE" id="PS52002">
    <property type="entry name" value="SM"/>
    <property type="match status" value="1"/>
</dbReference>
<organism>
    <name type="scientific">Bordetella avium (strain 197N)</name>
    <dbReference type="NCBI Taxonomy" id="360910"/>
    <lineage>
        <taxon>Bacteria</taxon>
        <taxon>Pseudomonadati</taxon>
        <taxon>Pseudomonadota</taxon>
        <taxon>Betaproteobacteria</taxon>
        <taxon>Burkholderiales</taxon>
        <taxon>Alcaligenaceae</taxon>
        <taxon>Bordetella</taxon>
    </lineage>
</organism>
<keyword id="KW-1185">Reference proteome</keyword>
<keyword id="KW-0694">RNA-binding</keyword>
<keyword id="KW-0346">Stress response</keyword>
<gene>
    <name evidence="1" type="primary">hfq</name>
    <name type="ordered locus">BAV2338</name>
</gene>
<reference key="1">
    <citation type="journal article" date="2006" name="J. Bacteriol.">
        <title>Comparison of the genome sequence of the poultry pathogen Bordetella avium with those of B. bronchiseptica, B. pertussis, and B. parapertussis reveals extensive diversity in surface structures associated with host interaction.</title>
        <authorList>
            <person name="Sebaihia M."/>
            <person name="Preston A."/>
            <person name="Maskell D.J."/>
            <person name="Kuzmiak H."/>
            <person name="Connell T.D."/>
            <person name="King N.D."/>
            <person name="Orndorff P.E."/>
            <person name="Miyamoto D.M."/>
            <person name="Thomson N.R."/>
            <person name="Harris D."/>
            <person name="Goble A."/>
            <person name="Lord A."/>
            <person name="Murphy L."/>
            <person name="Quail M.A."/>
            <person name="Rutter S."/>
            <person name="Squares R."/>
            <person name="Squares S."/>
            <person name="Woodward J."/>
            <person name="Parkhill J."/>
            <person name="Temple L.M."/>
        </authorList>
    </citation>
    <scope>NUCLEOTIDE SEQUENCE [LARGE SCALE GENOMIC DNA]</scope>
    <source>
        <strain>197N</strain>
    </source>
</reference>
<proteinExistence type="inferred from homology"/>